<organism>
    <name type="scientific">Schizosaccharomyces pombe (strain 972 / ATCC 24843)</name>
    <name type="common">Fission yeast</name>
    <dbReference type="NCBI Taxonomy" id="284812"/>
    <lineage>
        <taxon>Eukaryota</taxon>
        <taxon>Fungi</taxon>
        <taxon>Dikarya</taxon>
        <taxon>Ascomycota</taxon>
        <taxon>Taphrinomycotina</taxon>
        <taxon>Schizosaccharomycetes</taxon>
        <taxon>Schizosaccharomycetales</taxon>
        <taxon>Schizosaccharomycetaceae</taxon>
        <taxon>Schizosaccharomyces</taxon>
    </lineage>
</organism>
<protein>
    <recommendedName>
        <fullName>Putative uncharacterized protein C3E7.17</fullName>
    </recommendedName>
</protein>
<gene>
    <name type="ORF">SPBC3E7.17</name>
</gene>
<proteinExistence type="predicted"/>
<keyword id="KW-1185">Reference proteome</keyword>
<feature type="chain" id="PRO_0000416637" description="Putative uncharacterized protein C3E7.17">
    <location>
        <begin position="1"/>
        <end position="60"/>
    </location>
</feature>
<reference key="1">
    <citation type="journal article" date="2002" name="Nature">
        <title>The genome sequence of Schizosaccharomyces pombe.</title>
        <authorList>
            <person name="Wood V."/>
            <person name="Gwilliam R."/>
            <person name="Rajandream M.A."/>
            <person name="Lyne M.H."/>
            <person name="Lyne R."/>
            <person name="Stewart A."/>
            <person name="Sgouros J.G."/>
            <person name="Peat N."/>
            <person name="Hayles J."/>
            <person name="Baker S.G."/>
            <person name="Basham D."/>
            <person name="Bowman S."/>
            <person name="Brooks K."/>
            <person name="Brown D."/>
            <person name="Brown S."/>
            <person name="Chillingworth T."/>
            <person name="Churcher C.M."/>
            <person name="Collins M."/>
            <person name="Connor R."/>
            <person name="Cronin A."/>
            <person name="Davis P."/>
            <person name="Feltwell T."/>
            <person name="Fraser A."/>
            <person name="Gentles S."/>
            <person name="Goble A."/>
            <person name="Hamlin N."/>
            <person name="Harris D.E."/>
            <person name="Hidalgo J."/>
            <person name="Hodgson G."/>
            <person name="Holroyd S."/>
            <person name="Hornsby T."/>
            <person name="Howarth S."/>
            <person name="Huckle E.J."/>
            <person name="Hunt S."/>
            <person name="Jagels K."/>
            <person name="James K.D."/>
            <person name="Jones L."/>
            <person name="Jones M."/>
            <person name="Leather S."/>
            <person name="McDonald S."/>
            <person name="McLean J."/>
            <person name="Mooney P."/>
            <person name="Moule S."/>
            <person name="Mungall K.L."/>
            <person name="Murphy L.D."/>
            <person name="Niblett D."/>
            <person name="Odell C."/>
            <person name="Oliver K."/>
            <person name="O'Neil S."/>
            <person name="Pearson D."/>
            <person name="Quail M.A."/>
            <person name="Rabbinowitsch E."/>
            <person name="Rutherford K.M."/>
            <person name="Rutter S."/>
            <person name="Saunders D."/>
            <person name="Seeger K."/>
            <person name="Sharp S."/>
            <person name="Skelton J."/>
            <person name="Simmonds M.N."/>
            <person name="Squares R."/>
            <person name="Squares S."/>
            <person name="Stevens K."/>
            <person name="Taylor K."/>
            <person name="Taylor R.G."/>
            <person name="Tivey A."/>
            <person name="Walsh S.V."/>
            <person name="Warren T."/>
            <person name="Whitehead S."/>
            <person name="Woodward J.R."/>
            <person name="Volckaert G."/>
            <person name="Aert R."/>
            <person name="Robben J."/>
            <person name="Grymonprez B."/>
            <person name="Weltjens I."/>
            <person name="Vanstreels E."/>
            <person name="Rieger M."/>
            <person name="Schaefer M."/>
            <person name="Mueller-Auer S."/>
            <person name="Gabel C."/>
            <person name="Fuchs M."/>
            <person name="Duesterhoeft A."/>
            <person name="Fritzc C."/>
            <person name="Holzer E."/>
            <person name="Moestl D."/>
            <person name="Hilbert H."/>
            <person name="Borzym K."/>
            <person name="Langer I."/>
            <person name="Beck A."/>
            <person name="Lehrach H."/>
            <person name="Reinhardt R."/>
            <person name="Pohl T.M."/>
            <person name="Eger P."/>
            <person name="Zimmermann W."/>
            <person name="Wedler H."/>
            <person name="Wambutt R."/>
            <person name="Purnelle B."/>
            <person name="Goffeau A."/>
            <person name="Cadieu E."/>
            <person name="Dreano S."/>
            <person name="Gloux S."/>
            <person name="Lelaure V."/>
            <person name="Mottier S."/>
            <person name="Galibert F."/>
            <person name="Aves S.J."/>
            <person name="Xiang Z."/>
            <person name="Hunt C."/>
            <person name="Moore K."/>
            <person name="Hurst S.M."/>
            <person name="Lucas M."/>
            <person name="Rochet M."/>
            <person name="Gaillardin C."/>
            <person name="Tallada V.A."/>
            <person name="Garzon A."/>
            <person name="Thode G."/>
            <person name="Daga R.R."/>
            <person name="Cruzado L."/>
            <person name="Jimenez J."/>
            <person name="Sanchez M."/>
            <person name="del Rey F."/>
            <person name="Benito J."/>
            <person name="Dominguez A."/>
            <person name="Revuelta J.L."/>
            <person name="Moreno S."/>
            <person name="Armstrong J."/>
            <person name="Forsburg S.L."/>
            <person name="Cerutti L."/>
            <person name="Lowe T."/>
            <person name="McCombie W.R."/>
            <person name="Paulsen I."/>
            <person name="Potashkin J."/>
            <person name="Shpakovski G.V."/>
            <person name="Ussery D."/>
            <person name="Barrell B.G."/>
            <person name="Nurse P."/>
        </authorList>
    </citation>
    <scope>NUCLEOTIDE SEQUENCE [LARGE SCALE GENOMIC DNA]</scope>
    <source>
        <strain>972 / ATCC 24843</strain>
    </source>
</reference>
<dbReference type="EMBL" id="CU329671">
    <property type="protein sequence ID" value="CCD31372.1"/>
    <property type="molecule type" value="Genomic_DNA"/>
</dbReference>
<dbReference type="RefSeq" id="XP_004001719.1">
    <property type="nucleotide sequence ID" value="XM_004001670.1"/>
</dbReference>
<dbReference type="PaxDb" id="4896-SPBC3E7.17.1"/>
<dbReference type="EnsemblFungi" id="SPBC3E7.17.1">
    <property type="protein sequence ID" value="SPBC3E7.17.1:pep"/>
    <property type="gene ID" value="SPBC3E7.17"/>
</dbReference>
<dbReference type="PomBase" id="SPBC3E7.17"/>
<dbReference type="VEuPathDB" id="FungiDB:SPBC3E7.17"/>
<dbReference type="HOGENOM" id="CLU_2943103_0_0_1"/>
<dbReference type="InParanoid" id="G2TRQ5"/>
<dbReference type="PRO" id="PR:G2TRQ5"/>
<dbReference type="Proteomes" id="UP000002485">
    <property type="component" value="Chromosome II"/>
</dbReference>
<accession>G2TRQ5</accession>
<sequence length="60" mass="7012">MLTVECLIYAINFTSDSIGRSLKLWGTSRRLRFAETESFHNKKPTSLFTQHEFSYSCAYQ</sequence>
<name>YHXH_SCHPO</name>